<reference key="1">
    <citation type="journal article" date="2005" name="J. Bacteriol.">
        <title>Insights on evolution of virulence and resistance from the complete genome analysis of an early methicillin-resistant Staphylococcus aureus strain and a biofilm-producing methicillin-resistant Staphylococcus epidermidis strain.</title>
        <authorList>
            <person name="Gill S.R."/>
            <person name="Fouts D.E."/>
            <person name="Archer G.L."/>
            <person name="Mongodin E.F."/>
            <person name="DeBoy R.T."/>
            <person name="Ravel J."/>
            <person name="Paulsen I.T."/>
            <person name="Kolonay J.F."/>
            <person name="Brinkac L.M."/>
            <person name="Beanan M.J."/>
            <person name="Dodson R.J."/>
            <person name="Daugherty S.C."/>
            <person name="Madupu R."/>
            <person name="Angiuoli S.V."/>
            <person name="Durkin A.S."/>
            <person name="Haft D.H."/>
            <person name="Vamathevan J.J."/>
            <person name="Khouri H."/>
            <person name="Utterback T.R."/>
            <person name="Lee C."/>
            <person name="Dimitrov G."/>
            <person name="Jiang L."/>
            <person name="Qin H."/>
            <person name="Weidman J."/>
            <person name="Tran K."/>
            <person name="Kang K.H."/>
            <person name="Hance I.R."/>
            <person name="Nelson K.E."/>
            <person name="Fraser C.M."/>
        </authorList>
    </citation>
    <scope>NUCLEOTIDE SEQUENCE [LARGE SCALE GENOMIC DNA]</scope>
    <source>
        <strain>ATCC 35984 / DSM 28319 / BCRC 17069 / CCUG 31568 / BM 3577 / RP62A</strain>
    </source>
</reference>
<organism>
    <name type="scientific">Staphylococcus epidermidis (strain ATCC 35984 / DSM 28319 / BCRC 17069 / CCUG 31568 / BM 3577 / RP62A)</name>
    <dbReference type="NCBI Taxonomy" id="176279"/>
    <lineage>
        <taxon>Bacteria</taxon>
        <taxon>Bacillati</taxon>
        <taxon>Bacillota</taxon>
        <taxon>Bacilli</taxon>
        <taxon>Bacillales</taxon>
        <taxon>Staphylococcaceae</taxon>
        <taxon>Staphylococcus</taxon>
    </lineage>
</organism>
<evidence type="ECO:0000255" key="1"/>
<evidence type="ECO:0000255" key="2">
    <source>
        <dbReference type="PROSITE-ProRule" id="PRU00095"/>
    </source>
</evidence>
<evidence type="ECO:0000305" key="3"/>
<feature type="chain" id="PRO_0000286962" description="Uncharacterized membrane protein SERP0413">
    <location>
        <begin position="1"/>
        <end position="356"/>
    </location>
</feature>
<feature type="transmembrane region" description="Helical" evidence="1">
    <location>
        <begin position="2"/>
        <end position="22"/>
    </location>
</feature>
<feature type="transmembrane region" description="Helical" evidence="1">
    <location>
        <begin position="35"/>
        <end position="55"/>
    </location>
</feature>
<feature type="transmembrane region" description="Helical" evidence="1">
    <location>
        <begin position="76"/>
        <end position="96"/>
    </location>
</feature>
<feature type="transmembrane region" description="Helical" evidence="1">
    <location>
        <begin position="99"/>
        <end position="119"/>
    </location>
</feature>
<feature type="transmembrane region" description="Helical" evidence="1">
    <location>
        <begin position="124"/>
        <end position="144"/>
    </location>
</feature>
<feature type="transmembrane region" description="Helical" evidence="1">
    <location>
        <begin position="151"/>
        <end position="171"/>
    </location>
</feature>
<feature type="domain" description="GGDEF" evidence="2">
    <location>
        <begin position="218"/>
        <end position="353"/>
    </location>
</feature>
<protein>
    <recommendedName>
        <fullName>Uncharacterized membrane protein SERP0413</fullName>
    </recommendedName>
</protein>
<proteinExistence type="predicted"/>
<sequence length="356" mass="40592">MFEAIIYNISVMVAGIYLFHRLQYSENKRMIFSKEYVTVLMTFVSLLLAAYPIPFQNEYLVHLTFVPLLFLGRYTNMIYTLTAAFIVSLVDVFIFGNSIIYGITLIVIAGIVSAVGPFLKQNDIISLLILNLISIIILLFLALLSPIYELVEILVLIPISFIITIASAITFVDIWHFFSLVNRYENEDKYDYLTGLGNVKEFDRHLNEVSSKAEEKKQSLALLLIDIDGFKDVNDHYSHQSGDAVLKQMSQLLKNYVPNQFKIFRNGGEEFSVVIRDYTLDQSVKLAENIRSGVEKSSFHLPNKEVIKLSVSIGVGYLTQEDRKSQRKVFKDADDMVHVAKSEGRNKVMFNPIVKL</sequence>
<accession>Q5HQY3</accession>
<name>Y413_STAEQ</name>
<comment type="subcellular location">
    <subcellularLocation>
        <location evidence="3">Cell membrane</location>
        <topology evidence="3">Multi-pass membrane protein</topology>
    </subcellularLocation>
</comment>
<comment type="sequence caution" evidence="3">
    <conflict type="erroneous initiation">
        <sequence resource="EMBL-CDS" id="AAW53819"/>
    </conflict>
</comment>
<keyword id="KW-1003">Cell membrane</keyword>
<keyword id="KW-0472">Membrane</keyword>
<keyword id="KW-1185">Reference proteome</keyword>
<keyword id="KW-0812">Transmembrane</keyword>
<keyword id="KW-1133">Transmembrane helix</keyword>
<gene>
    <name type="ordered locus">SERP0413</name>
</gene>
<dbReference type="EMBL" id="CP000029">
    <property type="protein sequence ID" value="AAW53819.1"/>
    <property type="status" value="ALT_INIT"/>
    <property type="molecule type" value="Genomic_DNA"/>
</dbReference>
<dbReference type="SMR" id="Q5HQY3"/>
<dbReference type="STRING" id="176279.SERP0413"/>
<dbReference type="KEGG" id="ser:SERP0413"/>
<dbReference type="eggNOG" id="COG2199">
    <property type="taxonomic scope" value="Bacteria"/>
</dbReference>
<dbReference type="HOGENOM" id="CLU_000445_11_1_9"/>
<dbReference type="Proteomes" id="UP000000531">
    <property type="component" value="Chromosome"/>
</dbReference>
<dbReference type="GO" id="GO:0005886">
    <property type="term" value="C:plasma membrane"/>
    <property type="evidence" value="ECO:0007669"/>
    <property type="project" value="UniProtKB-SubCell"/>
</dbReference>
<dbReference type="GO" id="GO:0052621">
    <property type="term" value="F:diguanylate cyclase activity"/>
    <property type="evidence" value="ECO:0007669"/>
    <property type="project" value="TreeGrafter"/>
</dbReference>
<dbReference type="GO" id="GO:0000155">
    <property type="term" value="F:phosphorelay sensor kinase activity"/>
    <property type="evidence" value="ECO:0007669"/>
    <property type="project" value="InterPro"/>
</dbReference>
<dbReference type="GO" id="GO:0043709">
    <property type="term" value="P:cell adhesion involved in single-species biofilm formation"/>
    <property type="evidence" value="ECO:0007669"/>
    <property type="project" value="TreeGrafter"/>
</dbReference>
<dbReference type="GO" id="GO:0071555">
    <property type="term" value="P:cell wall organization"/>
    <property type="evidence" value="ECO:0007669"/>
    <property type="project" value="InterPro"/>
</dbReference>
<dbReference type="GO" id="GO:1902201">
    <property type="term" value="P:negative regulation of bacterial-type flagellum-dependent cell motility"/>
    <property type="evidence" value="ECO:0007669"/>
    <property type="project" value="TreeGrafter"/>
</dbReference>
<dbReference type="CDD" id="cd01949">
    <property type="entry name" value="GGDEF"/>
    <property type="match status" value="1"/>
</dbReference>
<dbReference type="FunFam" id="3.30.70.270:FF:000038">
    <property type="entry name" value="Diguanylate cyclase domain protein"/>
    <property type="match status" value="1"/>
</dbReference>
<dbReference type="Gene3D" id="3.30.70.270">
    <property type="match status" value="1"/>
</dbReference>
<dbReference type="InterPro" id="IPR050469">
    <property type="entry name" value="Diguanylate_Cyclase"/>
</dbReference>
<dbReference type="InterPro" id="IPR000160">
    <property type="entry name" value="GGDEF_dom"/>
</dbReference>
<dbReference type="InterPro" id="IPR029787">
    <property type="entry name" value="Nucleotide_cyclase"/>
</dbReference>
<dbReference type="InterPro" id="IPR043128">
    <property type="entry name" value="Rev_trsase/Diguanyl_cyclase"/>
</dbReference>
<dbReference type="InterPro" id="IPR011620">
    <property type="entry name" value="Sig_transdc_His_kinase_LytS_TM"/>
</dbReference>
<dbReference type="NCBIfam" id="TIGR00254">
    <property type="entry name" value="GGDEF"/>
    <property type="match status" value="1"/>
</dbReference>
<dbReference type="PANTHER" id="PTHR45138:SF9">
    <property type="entry name" value="DIGUANYLATE CYCLASE DGCM-RELATED"/>
    <property type="match status" value="1"/>
</dbReference>
<dbReference type="PANTHER" id="PTHR45138">
    <property type="entry name" value="REGULATORY COMPONENTS OF SENSORY TRANSDUCTION SYSTEM"/>
    <property type="match status" value="1"/>
</dbReference>
<dbReference type="Pfam" id="PF07694">
    <property type="entry name" value="5TM-5TMR_LYT"/>
    <property type="match status" value="1"/>
</dbReference>
<dbReference type="Pfam" id="PF00990">
    <property type="entry name" value="GGDEF"/>
    <property type="match status" value="1"/>
</dbReference>
<dbReference type="SMART" id="SM00267">
    <property type="entry name" value="GGDEF"/>
    <property type="match status" value="1"/>
</dbReference>
<dbReference type="SUPFAM" id="SSF55073">
    <property type="entry name" value="Nucleotide cyclase"/>
    <property type="match status" value="1"/>
</dbReference>
<dbReference type="PROSITE" id="PS50887">
    <property type="entry name" value="GGDEF"/>
    <property type="match status" value="1"/>
</dbReference>